<protein>
    <recommendedName>
        <fullName evidence="6">Indole glucosinolate O-methyltransferase 1</fullName>
        <ecNumber evidence="7">2.1.1.-</ecNumber>
    </recommendedName>
</protein>
<feature type="chain" id="PRO_0000435495" description="Indole glucosinolate O-methyltransferase 1">
    <location>
        <begin position="1"/>
        <end position="373"/>
    </location>
</feature>
<feature type="active site" description="Proton acceptor" evidence="1 2">
    <location>
        <position position="278"/>
    </location>
</feature>
<feature type="binding site" evidence="1">
    <location>
        <position position="217"/>
    </location>
    <ligand>
        <name>S-adenosyl-L-homocysteine</name>
        <dbReference type="ChEBI" id="CHEBI:57856"/>
    </ligand>
</feature>
<feature type="binding site" evidence="1">
    <location>
        <position position="240"/>
    </location>
    <ligand>
        <name>S-adenosyl-L-homocysteine</name>
        <dbReference type="ChEBI" id="CHEBI:57856"/>
    </ligand>
</feature>
<feature type="binding site" evidence="1">
    <location>
        <position position="260"/>
    </location>
    <ligand>
        <name>S-adenosyl-L-homocysteine</name>
        <dbReference type="ChEBI" id="CHEBI:57856"/>
    </ligand>
</feature>
<feature type="binding site" evidence="1">
    <location>
        <position position="261"/>
    </location>
    <ligand>
        <name>S-adenosyl-L-homocysteine</name>
        <dbReference type="ChEBI" id="CHEBI:57856"/>
    </ligand>
</feature>
<feature type="binding site" evidence="1">
    <location>
        <position position="274"/>
    </location>
    <ligand>
        <name>S-adenosyl-L-homocysteine</name>
        <dbReference type="ChEBI" id="CHEBI:57856"/>
    </ligand>
</feature>
<name>IGMT1_ARATH</name>
<organism>
    <name type="scientific">Arabidopsis thaliana</name>
    <name type="common">Mouse-ear cress</name>
    <dbReference type="NCBI Taxonomy" id="3702"/>
    <lineage>
        <taxon>Eukaryota</taxon>
        <taxon>Viridiplantae</taxon>
        <taxon>Streptophyta</taxon>
        <taxon>Embryophyta</taxon>
        <taxon>Tracheophyta</taxon>
        <taxon>Spermatophyta</taxon>
        <taxon>Magnoliopsida</taxon>
        <taxon>eudicotyledons</taxon>
        <taxon>Gunneridae</taxon>
        <taxon>Pentapetalae</taxon>
        <taxon>rosids</taxon>
        <taxon>malvids</taxon>
        <taxon>Brassicales</taxon>
        <taxon>Brassicaceae</taxon>
        <taxon>Camelineae</taxon>
        <taxon>Arabidopsis</taxon>
    </lineage>
</organism>
<comment type="function">
    <text evidence="4">Involved in indole glucosinolate biosynthesis. Catalyzes methoxylation reactions of the glucosinolate indole ring. Converts the hydroxy intermediates 4-hydroxy-indol-3-yl-methylglucosinolate (4OH-I3M) and 1-hydroxy-indol-3-yl-methylglucosinolate (1OH-I3M) to 4-methoxy-indol-3-yl-methylglucosinolate (4MO-I3M) and 1-methoxy-indol-3-yl-methylglucosinolate (1MO-I3M), respectively.</text>
</comment>
<comment type="pathway">
    <text evidence="7">Secondary metabolite biosynthesis.</text>
</comment>
<comment type="subunit">
    <text evidence="5">Interacts with B'GAMMA.</text>
</comment>
<comment type="induction">
    <text evidence="3">By the green peach aphid Myzus persicae.</text>
</comment>
<comment type="similarity">
    <text evidence="2">Belongs to the class I-like SAM-binding methyltransferase superfamily. Cation-independent O-methyltransferase family.</text>
</comment>
<evidence type="ECO:0000250" key="1">
    <source>
        <dbReference type="UniProtKB" id="P28002"/>
    </source>
</evidence>
<evidence type="ECO:0000255" key="2">
    <source>
        <dbReference type="PROSITE-ProRule" id="PRU01020"/>
    </source>
</evidence>
<evidence type="ECO:0000269" key="3">
    <source>
    </source>
</evidence>
<evidence type="ECO:0000269" key="4">
    <source>
    </source>
</evidence>
<evidence type="ECO:0000269" key="5">
    <source>
    </source>
</evidence>
<evidence type="ECO:0000303" key="6">
    <source>
    </source>
</evidence>
<evidence type="ECO:0000305" key="7"/>
<evidence type="ECO:0000312" key="8">
    <source>
        <dbReference type="Araport" id="AT1G21100"/>
    </source>
</evidence>
<evidence type="ECO:0000312" key="9">
    <source>
        <dbReference type="EMBL" id="AAF80651.1"/>
    </source>
</evidence>
<gene>
    <name evidence="6" type="primary">IGMT1</name>
    <name evidence="8" type="ordered locus">At1g21100</name>
    <name evidence="9" type="ORF">T22I11.7</name>
</gene>
<accession>Q9LPU5</accession>
<dbReference type="EC" id="2.1.1.-" evidence="7"/>
<dbReference type="EMBL" id="AC012190">
    <property type="protein sequence ID" value="AAF80651.1"/>
    <property type="molecule type" value="Genomic_DNA"/>
</dbReference>
<dbReference type="EMBL" id="CP002684">
    <property type="protein sequence ID" value="AEE30064.1"/>
    <property type="molecule type" value="Genomic_DNA"/>
</dbReference>
<dbReference type="EMBL" id="AF344316">
    <property type="protein sequence ID" value="AAK06867.1"/>
    <property type="molecule type" value="mRNA"/>
</dbReference>
<dbReference type="EMBL" id="AY057529">
    <property type="protein sequence ID" value="AAL09769.1"/>
    <property type="molecule type" value="mRNA"/>
</dbReference>
<dbReference type="EMBL" id="AY143974">
    <property type="protein sequence ID" value="AAN28913.1"/>
    <property type="molecule type" value="mRNA"/>
</dbReference>
<dbReference type="PIR" id="B86344">
    <property type="entry name" value="B86344"/>
</dbReference>
<dbReference type="RefSeq" id="NP_173534.1">
    <property type="nucleotide sequence ID" value="NM_101964.3"/>
</dbReference>
<dbReference type="SMR" id="Q9LPU5"/>
<dbReference type="FunCoup" id="Q9LPU5">
    <property type="interactions" value="453"/>
</dbReference>
<dbReference type="STRING" id="3702.Q9LPU5"/>
<dbReference type="PaxDb" id="3702-AT1G21100.1"/>
<dbReference type="ProteomicsDB" id="232279"/>
<dbReference type="EnsemblPlants" id="AT1G21100.1">
    <property type="protein sequence ID" value="AT1G21100.1"/>
    <property type="gene ID" value="AT1G21100"/>
</dbReference>
<dbReference type="GeneID" id="838706"/>
<dbReference type="Gramene" id="AT1G21100.1">
    <property type="protein sequence ID" value="AT1G21100.1"/>
    <property type="gene ID" value="AT1G21100"/>
</dbReference>
<dbReference type="KEGG" id="ath:AT1G21100"/>
<dbReference type="Araport" id="AT1G21100"/>
<dbReference type="TAIR" id="AT1G21100">
    <property type="gene designation" value="IGMT1"/>
</dbReference>
<dbReference type="eggNOG" id="KOG3178">
    <property type="taxonomic scope" value="Eukaryota"/>
</dbReference>
<dbReference type="HOGENOM" id="CLU_005533_12_1_1"/>
<dbReference type="InParanoid" id="Q9LPU5"/>
<dbReference type="OMA" id="HHIKGIN"/>
<dbReference type="PhylomeDB" id="Q9LPU5"/>
<dbReference type="BioCyc" id="ARA:AT1G21100-MONOMER"/>
<dbReference type="PRO" id="PR:Q9LPU5"/>
<dbReference type="Proteomes" id="UP000006548">
    <property type="component" value="Chromosome 1"/>
</dbReference>
<dbReference type="ExpressionAtlas" id="Q9LPU5">
    <property type="expression patterns" value="baseline and differential"/>
</dbReference>
<dbReference type="GO" id="GO:0008168">
    <property type="term" value="F:methyltransferase activity"/>
    <property type="evidence" value="ECO:0000314"/>
    <property type="project" value="TAIR"/>
</dbReference>
<dbReference type="GO" id="GO:0008171">
    <property type="term" value="F:O-methyltransferase activity"/>
    <property type="evidence" value="ECO:0007669"/>
    <property type="project" value="InterPro"/>
</dbReference>
<dbReference type="GO" id="GO:0046983">
    <property type="term" value="F:protein dimerization activity"/>
    <property type="evidence" value="ECO:0007669"/>
    <property type="project" value="InterPro"/>
</dbReference>
<dbReference type="GO" id="GO:0042343">
    <property type="term" value="P:indole glucosinolate metabolic process"/>
    <property type="evidence" value="ECO:0000314"/>
    <property type="project" value="TAIR"/>
</dbReference>
<dbReference type="GO" id="GO:0032259">
    <property type="term" value="P:methylation"/>
    <property type="evidence" value="ECO:0007669"/>
    <property type="project" value="UniProtKB-KW"/>
</dbReference>
<dbReference type="FunFam" id="1.10.10.10:FF:000357">
    <property type="entry name" value="Caffeic acid 3-O-methyltransferase"/>
    <property type="match status" value="1"/>
</dbReference>
<dbReference type="FunFam" id="3.40.50.150:FF:000061">
    <property type="entry name" value="Caffeic acid O-methyltransferase"/>
    <property type="match status" value="1"/>
</dbReference>
<dbReference type="Gene3D" id="3.40.50.150">
    <property type="entry name" value="Vaccinia Virus protein VP39"/>
    <property type="match status" value="1"/>
</dbReference>
<dbReference type="Gene3D" id="1.10.10.10">
    <property type="entry name" value="Winged helix-like DNA-binding domain superfamily/Winged helix DNA-binding domain"/>
    <property type="match status" value="1"/>
</dbReference>
<dbReference type="InterPro" id="IPR016461">
    <property type="entry name" value="COMT-like"/>
</dbReference>
<dbReference type="InterPro" id="IPR001077">
    <property type="entry name" value="O_MeTrfase_dom"/>
</dbReference>
<dbReference type="InterPro" id="IPR012967">
    <property type="entry name" value="Plant_O-MeTrfase_dimerisation"/>
</dbReference>
<dbReference type="InterPro" id="IPR029063">
    <property type="entry name" value="SAM-dependent_MTases_sf"/>
</dbReference>
<dbReference type="InterPro" id="IPR036388">
    <property type="entry name" value="WH-like_DNA-bd_sf"/>
</dbReference>
<dbReference type="InterPro" id="IPR036390">
    <property type="entry name" value="WH_DNA-bd_sf"/>
</dbReference>
<dbReference type="PANTHER" id="PTHR11746">
    <property type="entry name" value="O-METHYLTRANSFERASE"/>
    <property type="match status" value="1"/>
</dbReference>
<dbReference type="Pfam" id="PF08100">
    <property type="entry name" value="Dimerisation"/>
    <property type="match status" value="1"/>
</dbReference>
<dbReference type="Pfam" id="PF00891">
    <property type="entry name" value="Methyltransf_2"/>
    <property type="match status" value="1"/>
</dbReference>
<dbReference type="PIRSF" id="PIRSF005739">
    <property type="entry name" value="O-mtase"/>
    <property type="match status" value="1"/>
</dbReference>
<dbReference type="SUPFAM" id="SSF53335">
    <property type="entry name" value="S-adenosyl-L-methionine-dependent methyltransferases"/>
    <property type="match status" value="1"/>
</dbReference>
<dbReference type="SUPFAM" id="SSF46785">
    <property type="entry name" value="Winged helix' DNA-binding domain"/>
    <property type="match status" value="1"/>
</dbReference>
<dbReference type="PROSITE" id="PS51683">
    <property type="entry name" value="SAM_OMT_II"/>
    <property type="match status" value="1"/>
</dbReference>
<keyword id="KW-0489">Methyltransferase</keyword>
<keyword id="KW-1185">Reference proteome</keyword>
<keyword id="KW-0949">S-adenosyl-L-methionine</keyword>
<keyword id="KW-0808">Transferase</keyword>
<sequence>MGYLFQETLSSNPKTPIVVDDDNELGLMAVRLANAAAFPMVLKAALELGVFDTLYAAASRTDSFLSPYEIASKLPTTPRNPEAPVLLDRMLRLLASYSMVKCGKALSGKGERVYRAEPICRFFLKDNIQDIGSLASQVIVNFDSVFLNTWAQLKDVVLEGGDAFGRAHGGMKLFDYMGTDERFSKLFNQTGFTIAVVKKALEVYEGFKGVKVLVDVGGGVGNTLGVVTSKYPNIKGINFDLTCALAQAPSYPGVEHVAGDMFVDVPTGDAMILKRILHDWTDEDCVKILKNCWKSLPENGKVVVIELVTPDEAENGDINANIAFDMDMLMFTQCSGGKERSRAEFEALAAASGFTHCKFVCQAYHCWIIEFCK</sequence>
<reference key="1">
    <citation type="journal article" date="2000" name="Nature">
        <title>Sequence and analysis of chromosome 1 of the plant Arabidopsis thaliana.</title>
        <authorList>
            <person name="Theologis A."/>
            <person name="Ecker J.R."/>
            <person name="Palm C.J."/>
            <person name="Federspiel N.A."/>
            <person name="Kaul S."/>
            <person name="White O."/>
            <person name="Alonso J."/>
            <person name="Altafi H."/>
            <person name="Araujo R."/>
            <person name="Bowman C.L."/>
            <person name="Brooks S.Y."/>
            <person name="Buehler E."/>
            <person name="Chan A."/>
            <person name="Chao Q."/>
            <person name="Chen H."/>
            <person name="Cheuk R.F."/>
            <person name="Chin C.W."/>
            <person name="Chung M.K."/>
            <person name="Conn L."/>
            <person name="Conway A.B."/>
            <person name="Conway A.R."/>
            <person name="Creasy T.H."/>
            <person name="Dewar K."/>
            <person name="Dunn P."/>
            <person name="Etgu P."/>
            <person name="Feldblyum T.V."/>
            <person name="Feng J.-D."/>
            <person name="Fong B."/>
            <person name="Fujii C.Y."/>
            <person name="Gill J.E."/>
            <person name="Goldsmith A.D."/>
            <person name="Haas B."/>
            <person name="Hansen N.F."/>
            <person name="Hughes B."/>
            <person name="Huizar L."/>
            <person name="Hunter J.L."/>
            <person name="Jenkins J."/>
            <person name="Johnson-Hopson C."/>
            <person name="Khan S."/>
            <person name="Khaykin E."/>
            <person name="Kim C.J."/>
            <person name="Koo H.L."/>
            <person name="Kremenetskaia I."/>
            <person name="Kurtz D.B."/>
            <person name="Kwan A."/>
            <person name="Lam B."/>
            <person name="Langin-Hooper S."/>
            <person name="Lee A."/>
            <person name="Lee J.M."/>
            <person name="Lenz C.A."/>
            <person name="Li J.H."/>
            <person name="Li Y.-P."/>
            <person name="Lin X."/>
            <person name="Liu S.X."/>
            <person name="Liu Z.A."/>
            <person name="Luros J.S."/>
            <person name="Maiti R."/>
            <person name="Marziali A."/>
            <person name="Militscher J."/>
            <person name="Miranda M."/>
            <person name="Nguyen M."/>
            <person name="Nierman W.C."/>
            <person name="Osborne B.I."/>
            <person name="Pai G."/>
            <person name="Peterson J."/>
            <person name="Pham P.K."/>
            <person name="Rizzo M."/>
            <person name="Rooney T."/>
            <person name="Rowley D."/>
            <person name="Sakano H."/>
            <person name="Salzberg S.L."/>
            <person name="Schwartz J.R."/>
            <person name="Shinn P."/>
            <person name="Southwick A.M."/>
            <person name="Sun H."/>
            <person name="Tallon L.J."/>
            <person name="Tambunga G."/>
            <person name="Toriumi M.J."/>
            <person name="Town C.D."/>
            <person name="Utterback T."/>
            <person name="Van Aken S."/>
            <person name="Vaysberg M."/>
            <person name="Vysotskaia V.S."/>
            <person name="Walker M."/>
            <person name="Wu D."/>
            <person name="Yu G."/>
            <person name="Fraser C.M."/>
            <person name="Venter J.C."/>
            <person name="Davis R.W."/>
        </authorList>
    </citation>
    <scope>NUCLEOTIDE SEQUENCE [LARGE SCALE GENOMIC DNA]</scope>
    <source>
        <strain>cv. Columbia</strain>
    </source>
</reference>
<reference key="2">
    <citation type="journal article" date="2017" name="Plant J.">
        <title>Araport11: a complete reannotation of the Arabidopsis thaliana reference genome.</title>
        <authorList>
            <person name="Cheng C.Y."/>
            <person name="Krishnakumar V."/>
            <person name="Chan A.P."/>
            <person name="Thibaud-Nissen F."/>
            <person name="Schobel S."/>
            <person name="Town C.D."/>
        </authorList>
    </citation>
    <scope>GENOME REANNOTATION</scope>
    <source>
        <strain>cv. Columbia</strain>
    </source>
</reference>
<reference key="3">
    <citation type="journal article" date="2003" name="Science">
        <title>Empirical analysis of transcriptional activity in the Arabidopsis genome.</title>
        <authorList>
            <person name="Yamada K."/>
            <person name="Lim J."/>
            <person name="Dale J.M."/>
            <person name="Chen H."/>
            <person name="Shinn P."/>
            <person name="Palm C.J."/>
            <person name="Southwick A.M."/>
            <person name="Wu H.C."/>
            <person name="Kim C.J."/>
            <person name="Nguyen M."/>
            <person name="Pham P.K."/>
            <person name="Cheuk R.F."/>
            <person name="Karlin-Newmann G."/>
            <person name="Liu S.X."/>
            <person name="Lam B."/>
            <person name="Sakano H."/>
            <person name="Wu T."/>
            <person name="Yu G."/>
            <person name="Miranda M."/>
            <person name="Quach H.L."/>
            <person name="Tripp M."/>
            <person name="Chang C.H."/>
            <person name="Lee J.M."/>
            <person name="Toriumi M.J."/>
            <person name="Chan M.M."/>
            <person name="Tang C.C."/>
            <person name="Onodera C.S."/>
            <person name="Deng J.M."/>
            <person name="Akiyama K."/>
            <person name="Ansari Y."/>
            <person name="Arakawa T."/>
            <person name="Banh J."/>
            <person name="Banno F."/>
            <person name="Bowser L."/>
            <person name="Brooks S.Y."/>
            <person name="Carninci P."/>
            <person name="Chao Q."/>
            <person name="Choy N."/>
            <person name="Enju A."/>
            <person name="Goldsmith A.D."/>
            <person name="Gurjal M."/>
            <person name="Hansen N.F."/>
            <person name="Hayashizaki Y."/>
            <person name="Johnson-Hopson C."/>
            <person name="Hsuan V.W."/>
            <person name="Iida K."/>
            <person name="Karnes M."/>
            <person name="Khan S."/>
            <person name="Koesema E."/>
            <person name="Ishida J."/>
            <person name="Jiang P.X."/>
            <person name="Jones T."/>
            <person name="Kawai J."/>
            <person name="Kamiya A."/>
            <person name="Meyers C."/>
            <person name="Nakajima M."/>
            <person name="Narusaka M."/>
            <person name="Seki M."/>
            <person name="Sakurai T."/>
            <person name="Satou M."/>
            <person name="Tamse R."/>
            <person name="Vaysberg M."/>
            <person name="Wallender E.K."/>
            <person name="Wong C."/>
            <person name="Yamamura Y."/>
            <person name="Yuan S."/>
            <person name="Shinozaki K."/>
            <person name="Davis R.W."/>
            <person name="Theologis A."/>
            <person name="Ecker J.R."/>
        </authorList>
    </citation>
    <scope>NUCLEOTIDE SEQUENCE [LARGE SCALE MRNA]</scope>
    <source>
        <strain>cv. Columbia</strain>
    </source>
</reference>
<reference key="4">
    <citation type="journal article" date="2005" name="Mol. Plant Microbe Interact.">
        <title>Signal signature and transcriptome changes of Arabidopsis during pathogen and insect attack.</title>
        <authorList>
            <person name="De Vos M."/>
            <person name="Van Oosten V.R."/>
            <person name="Van Poecke R.M."/>
            <person name="Van Pelt J.A."/>
            <person name="Pozo M.J."/>
            <person name="Mueller M.J."/>
            <person name="Buchala A.J."/>
            <person name="Metraux J.P."/>
            <person name="Van Loon L.C."/>
            <person name="Dicke M."/>
            <person name="Pieterse C.M."/>
        </authorList>
    </citation>
    <scope>INDUCTION BY APHID</scope>
</reference>
<reference key="5">
    <citation type="journal article" date="2011" name="Plant Cell">
        <title>Metabolic engineering in Nicotiana benthamiana reveals key enzyme functions in Arabidopsis indole glucosinolate modification.</title>
        <authorList>
            <person name="Pfalz M."/>
            <person name="Mikkelsen M.D."/>
            <person name="Bednarek P."/>
            <person name="Olsen C.E."/>
            <person name="Halkier B.A."/>
            <person name="Kroymann J."/>
        </authorList>
    </citation>
    <scope>FUNCTION</scope>
</reference>
<reference key="6">
    <citation type="journal article" date="2017" name="Plant J.">
        <title>PP2A-B'gamma modulates foliar trans-methylation capacity and the formation of 4-methoxy-indol-3-yl-methyl glucosinolate in Arabidopsis leaves.</title>
        <authorList>
            <person name="Rahikainen M."/>
            <person name="Trotta A."/>
            <person name="Alegre S."/>
            <person name="Pascual J."/>
            <person name="Vuorinen K."/>
            <person name="Overmyer K."/>
            <person name="Moffatt B."/>
            <person name="Ravanel S."/>
            <person name="Glawischnig E."/>
            <person name="Kangasjaervi S."/>
        </authorList>
    </citation>
    <scope>INTERACTION WITH B'GAMMA</scope>
</reference>
<proteinExistence type="evidence at protein level"/>